<comment type="function">
    <text>The interaction of the RSA site and the PRE protein may not only serves a function in plasmid maintenance, but may also contributes to the distribution of small antibiotic resistance plasmids among Gram-positive bacteria.</text>
</comment>
<comment type="miscellaneous">
    <text>Contains conserved positively charged amino acids probably involved in the binding of the pre protein to the RSA site.</text>
</comment>
<comment type="similarity">
    <text evidence="3">Belongs to the plasmid mobilization pre family.</text>
</comment>
<name>PRE3_STAAU</name>
<keyword id="KW-0238">DNA-binding</keyword>
<keyword id="KW-0614">Plasmid</keyword>
<feature type="chain" id="PRO_0000068424" description="Plasmid recombination enzyme type 3">
    <location>
        <begin position="1"/>
        <end position="413"/>
    </location>
</feature>
<feature type="region of interest" description="Disordered" evidence="2">
    <location>
        <begin position="175"/>
        <end position="198"/>
    </location>
</feature>
<feature type="region of interest" description="Disordered" evidence="2">
    <location>
        <begin position="374"/>
        <end position="413"/>
    </location>
</feature>
<feature type="compositionally biased region" description="Basic and acidic residues" evidence="2">
    <location>
        <begin position="188"/>
        <end position="198"/>
    </location>
</feature>
<feature type="compositionally biased region" description="Basic and acidic residues" evidence="2">
    <location>
        <begin position="403"/>
        <end position="413"/>
    </location>
</feature>
<feature type="binding site" evidence="1">
    <location>
        <position position="45"/>
    </location>
    <ligand>
        <name>DNA</name>
        <dbReference type="ChEBI" id="CHEBI:16991"/>
    </ligand>
</feature>
<feature type="binding site" evidence="1">
    <location>
        <position position="115"/>
    </location>
    <ligand>
        <name>DNA</name>
        <dbReference type="ChEBI" id="CHEBI:16991"/>
    </ligand>
</feature>
<feature type="sequence conflict" description="In Ref. 2." evidence="3" ref="2">
    <original>E</original>
    <variation>G</variation>
    <location>
        <position position="364"/>
    </location>
</feature>
<feature type="sequence conflict" description="In Ref. 2." evidence="3" ref="2">
    <original>N</original>
    <variation>S</variation>
    <location>
        <position position="367"/>
    </location>
</feature>
<dbReference type="EMBL" id="J01764">
    <property type="protein sequence ID" value="AAA26036.1"/>
    <property type="molecule type" value="Genomic_DNA"/>
</dbReference>
<dbReference type="PIR" id="A04493">
    <property type="entry name" value="QQSA8T"/>
</dbReference>
<dbReference type="RefSeq" id="NP_040472.1">
    <property type="nucleotide sequence ID" value="NC_001393.1"/>
</dbReference>
<dbReference type="RefSeq" id="WP_010889940.1">
    <property type="nucleotide sequence ID" value="NC_001393.1"/>
</dbReference>
<dbReference type="SMR" id="P03864"/>
<dbReference type="GO" id="GO:0003677">
    <property type="term" value="F:DNA binding"/>
    <property type="evidence" value="ECO:0007669"/>
    <property type="project" value="UniProtKB-KW"/>
</dbReference>
<dbReference type="GO" id="GO:0006310">
    <property type="term" value="P:DNA recombination"/>
    <property type="evidence" value="ECO:0007669"/>
    <property type="project" value="InterPro"/>
</dbReference>
<dbReference type="CDD" id="cd17242">
    <property type="entry name" value="MobM_relaxase"/>
    <property type="match status" value="1"/>
</dbReference>
<dbReference type="Gene3D" id="3.30.930.30">
    <property type="match status" value="1"/>
</dbReference>
<dbReference type="InterPro" id="IPR001668">
    <property type="entry name" value="Mob_Pre"/>
</dbReference>
<dbReference type="NCBIfam" id="NF041497">
    <property type="entry name" value="MobV"/>
    <property type="match status" value="1"/>
</dbReference>
<dbReference type="Pfam" id="PF01076">
    <property type="entry name" value="Mob_Pre"/>
    <property type="match status" value="1"/>
</dbReference>
<organism>
    <name type="scientific">Staphylococcus aureus</name>
    <dbReference type="NCBI Taxonomy" id="1280"/>
    <lineage>
        <taxon>Bacteria</taxon>
        <taxon>Bacillati</taxon>
        <taxon>Bacillota</taxon>
        <taxon>Bacilli</taxon>
        <taxon>Bacillales</taxon>
        <taxon>Staphylococcaceae</taxon>
        <taxon>Staphylococcus</taxon>
    </lineage>
</organism>
<gene>
    <name type="primary">pre</name>
</gene>
<proteinExistence type="inferred from homology"/>
<accession>P03864</accession>
<evidence type="ECO:0000255" key="1"/>
<evidence type="ECO:0000256" key="2">
    <source>
        <dbReference type="SAM" id="MobiDB-lite"/>
    </source>
</evidence>
<evidence type="ECO:0000305" key="3"/>
<protein>
    <recommendedName>
        <fullName>Plasmid recombination enzyme type 3</fullName>
    </recommendedName>
    <alternativeName>
        <fullName>Mobilization protein</fullName>
    </alternativeName>
    <alternativeName>
        <fullName>Plasmid recombinase</fullName>
    </alternativeName>
</protein>
<geneLocation type="plasmid">
    <name>pT181</name>
</geneLocation>
<sequence>MSYSIVRVSKVKSGTNTTGIQKHVQRENNNYENEDIDHSKTYLNYDLVNANKQNFNNLIDEKIEQNYTGKRKIRTDAIKHIDGLITSDNDFFDNQTPEDTKQFFEYAKEFLEQEYGKDNLLYATVHMDEKTPHMHYGVVPITDDGRLSAKEVVGNKKALTAFQDRFNEHVKQRGYGLERGQSRQVTNAKHEQISQYKQKTEYHKQEYERESQKTDHIKQKNDKLMQEYQKSLNTLKKPINVPYEQETEKVGGLFSKEIQEAGNVVISQKDFNEFQKQIKAAQDISEDYEYIKSGRALDDKDKEIREKDDLLNKAVERIENADDNFNQLYENAKPLKENIEIALKLLKILLKELERVLGRNTFAERVNKLTEDEPKLNGLAGNLDKKMNPELYSEQEQQQEQQKNQKRDRGMHL</sequence>
<reference key="1">
    <citation type="journal article" date="1987" name="J. Bacteriol.">
        <title>A site-specific recombination function in Staphylococcus aureus plasmids.</title>
        <authorList>
            <person name="Gennaro M.L."/>
            <person name="Kornblum J."/>
            <person name="Novick R.P."/>
        </authorList>
    </citation>
    <scope>NUCLEOTIDE SEQUENCE [GENOMIC DNA]</scope>
</reference>
<reference key="2">
    <citation type="journal article" date="1983" name="Plasmid">
        <title>Complete nucleotide sequence of pT181, a tetracycline-resistance plasmid from Staphylococcus aureus.</title>
        <authorList>
            <person name="Khan S.A."/>
            <person name="Novick R.P."/>
        </authorList>
    </citation>
    <scope>NUCLEOTIDE SEQUENCE [GENOMIC DNA] OF 225-413</scope>
</reference>